<accession>A3DA85</accession>
<comment type="function">
    <text evidence="1">Involved in the post-transcriptional modification of the uridine at the wobble position (U34) of tRNA(Lys), tRNA(Glu) and tRNA(Gln). Catalyzes the conversion of 2-thiouridine (S2U-RNA) to 2-selenouridine (Se2U-RNA). Acts in a two-step process involving geranylation of 2-thiouridine (S2U) to S-geranyl-2-thiouridine (geS2U) and subsequent selenation of the latter derivative to 2-selenouridine (Se2U) in the tRNA chain.</text>
</comment>
<comment type="catalytic activity">
    <reaction evidence="1">
        <text>5-methylaminomethyl-2-thiouridine(34) in tRNA + selenophosphate + (2E)-geranyl diphosphate + H2O + H(+) = 5-methylaminomethyl-2-selenouridine(34) in tRNA + (2E)-thiogeraniol + phosphate + diphosphate</text>
        <dbReference type="Rhea" id="RHEA:42716"/>
        <dbReference type="Rhea" id="RHEA-COMP:10195"/>
        <dbReference type="Rhea" id="RHEA-COMP:10196"/>
        <dbReference type="ChEBI" id="CHEBI:15377"/>
        <dbReference type="ChEBI" id="CHEBI:15378"/>
        <dbReference type="ChEBI" id="CHEBI:16144"/>
        <dbReference type="ChEBI" id="CHEBI:33019"/>
        <dbReference type="ChEBI" id="CHEBI:43474"/>
        <dbReference type="ChEBI" id="CHEBI:58057"/>
        <dbReference type="ChEBI" id="CHEBI:74455"/>
        <dbReference type="ChEBI" id="CHEBI:82743"/>
        <dbReference type="ChEBI" id="CHEBI:143703"/>
        <dbReference type="EC" id="2.9.1.3"/>
    </reaction>
    <physiologicalReaction direction="left-to-right" evidence="1">
        <dbReference type="Rhea" id="RHEA:42717"/>
    </physiologicalReaction>
</comment>
<comment type="catalytic activity">
    <reaction evidence="1">
        <text>5-methylaminomethyl-2-thiouridine(34) in tRNA + (2E)-geranyl diphosphate = 5-methylaminomethyl-S-(2E)-geranyl-thiouridine(34) in tRNA + diphosphate</text>
        <dbReference type="Rhea" id="RHEA:14085"/>
        <dbReference type="Rhea" id="RHEA-COMP:10195"/>
        <dbReference type="Rhea" id="RHEA-COMP:14654"/>
        <dbReference type="ChEBI" id="CHEBI:33019"/>
        <dbReference type="ChEBI" id="CHEBI:58057"/>
        <dbReference type="ChEBI" id="CHEBI:74455"/>
        <dbReference type="ChEBI" id="CHEBI:140632"/>
    </reaction>
    <physiologicalReaction direction="left-to-right" evidence="1">
        <dbReference type="Rhea" id="RHEA:14086"/>
    </physiologicalReaction>
</comment>
<comment type="catalytic activity">
    <reaction evidence="1">
        <text>5-methylaminomethyl-S-(2E)-geranyl-thiouridine(34) in tRNA + selenophosphate + H(+) = 5-methylaminomethyl-2-(Se-phospho)selenouridine(34) in tRNA + (2E)-thiogeraniol</text>
        <dbReference type="Rhea" id="RHEA:60172"/>
        <dbReference type="Rhea" id="RHEA-COMP:14654"/>
        <dbReference type="Rhea" id="RHEA-COMP:15523"/>
        <dbReference type="ChEBI" id="CHEBI:15378"/>
        <dbReference type="ChEBI" id="CHEBI:16144"/>
        <dbReference type="ChEBI" id="CHEBI:140632"/>
        <dbReference type="ChEBI" id="CHEBI:143702"/>
        <dbReference type="ChEBI" id="CHEBI:143703"/>
    </reaction>
    <physiologicalReaction direction="left-to-right" evidence="1">
        <dbReference type="Rhea" id="RHEA:60173"/>
    </physiologicalReaction>
</comment>
<comment type="catalytic activity">
    <reaction evidence="1">
        <text>5-methylaminomethyl-2-(Se-phospho)selenouridine(34) in tRNA + H2O = 5-methylaminomethyl-2-selenouridine(34) in tRNA + phosphate</text>
        <dbReference type="Rhea" id="RHEA:60176"/>
        <dbReference type="Rhea" id="RHEA-COMP:10196"/>
        <dbReference type="Rhea" id="RHEA-COMP:15523"/>
        <dbReference type="ChEBI" id="CHEBI:15377"/>
        <dbReference type="ChEBI" id="CHEBI:43474"/>
        <dbReference type="ChEBI" id="CHEBI:82743"/>
        <dbReference type="ChEBI" id="CHEBI:143702"/>
    </reaction>
    <physiologicalReaction direction="left-to-right" evidence="1">
        <dbReference type="Rhea" id="RHEA:60177"/>
    </physiologicalReaction>
</comment>
<comment type="subunit">
    <text evidence="1">Monomer.</text>
</comment>
<comment type="similarity">
    <text evidence="1">Belongs to the SelU family.</text>
</comment>
<gene>
    <name evidence="1" type="primary">selU</name>
    <name type="ordered locus">Sbal_4183</name>
</gene>
<protein>
    <recommendedName>
        <fullName evidence="1">tRNA 2-selenouridine synthase</fullName>
        <ecNumber evidence="1">2.9.1.3</ecNumber>
    </recommendedName>
</protein>
<feature type="chain" id="PRO_1000069592" description="tRNA 2-selenouridine synthase">
    <location>
        <begin position="1"/>
        <end position="368"/>
    </location>
</feature>
<feature type="domain" description="Rhodanese" evidence="1">
    <location>
        <begin position="15"/>
        <end position="138"/>
    </location>
</feature>
<feature type="active site" description="S-selanylcysteine intermediate" evidence="1">
    <location>
        <position position="98"/>
    </location>
</feature>
<sequence length="368" mass="41679">MPNAIVAAEQYREIFLNQHPIMDVRAPIEFTRGAFPNSTNLPLMLDSEREKVGTCYKQSGQQAAIALGHSLVNGPIKQQRIEAWASYVKANPNAYLYCFRGGLRSQLSQQWLKEAGVEVPYIQGGYKAMRQYLIGVIEAAPAQQPLLSLSGMTGCGKTDFLLQRKEAVDLEGIANHRGSSFGKNIDPQSTQINFENQLAIALLQHQTSDAACLLLEDESFLIGRSALPQTFYNAMQAANVLVLEESDDARLERLRNEYVHKMYSGFCERLGPEAGFAAFSDYLLQSLVSIRKRLGGKQHQELQDLMQQALDQQINQNDTSLHLVWINLLLHKYYDPMYLYQLENKSERVLFKGSHQAMHEWLDSYQTR</sequence>
<organism>
    <name type="scientific">Shewanella baltica (strain OS155 / ATCC BAA-1091)</name>
    <dbReference type="NCBI Taxonomy" id="325240"/>
    <lineage>
        <taxon>Bacteria</taxon>
        <taxon>Pseudomonadati</taxon>
        <taxon>Pseudomonadota</taxon>
        <taxon>Gammaproteobacteria</taxon>
        <taxon>Alteromonadales</taxon>
        <taxon>Shewanellaceae</taxon>
        <taxon>Shewanella</taxon>
    </lineage>
</organism>
<keyword id="KW-1185">Reference proteome</keyword>
<keyword id="KW-0711">Selenium</keyword>
<keyword id="KW-0808">Transferase</keyword>
<name>SELU_SHEB5</name>
<proteinExistence type="inferred from homology"/>
<evidence type="ECO:0000255" key="1">
    <source>
        <dbReference type="HAMAP-Rule" id="MF_01622"/>
    </source>
</evidence>
<dbReference type="EC" id="2.9.1.3" evidence="1"/>
<dbReference type="EMBL" id="CP000563">
    <property type="protein sequence ID" value="ABN63648.1"/>
    <property type="molecule type" value="Genomic_DNA"/>
</dbReference>
<dbReference type="RefSeq" id="WP_011848158.1">
    <property type="nucleotide sequence ID" value="NC_009052.1"/>
</dbReference>
<dbReference type="SMR" id="A3DA85"/>
<dbReference type="STRING" id="325240.Sbal_4183"/>
<dbReference type="KEGG" id="sbl:Sbal_4183"/>
<dbReference type="HOGENOM" id="CLU_043456_1_0_6"/>
<dbReference type="OrthoDB" id="9808735at2"/>
<dbReference type="Proteomes" id="UP000001557">
    <property type="component" value="Chromosome"/>
</dbReference>
<dbReference type="GO" id="GO:0016765">
    <property type="term" value="F:transferase activity, transferring alkyl or aryl (other than methyl) groups"/>
    <property type="evidence" value="ECO:0007669"/>
    <property type="project" value="UniProtKB-UniRule"/>
</dbReference>
<dbReference type="GO" id="GO:0043828">
    <property type="term" value="F:tRNA 2-selenouridine synthase activity"/>
    <property type="evidence" value="ECO:0007669"/>
    <property type="project" value="UniProtKB-EC"/>
</dbReference>
<dbReference type="GO" id="GO:0002098">
    <property type="term" value="P:tRNA wobble uridine modification"/>
    <property type="evidence" value="ECO:0007669"/>
    <property type="project" value="UniProtKB-UniRule"/>
</dbReference>
<dbReference type="CDD" id="cd01520">
    <property type="entry name" value="RHOD_YbbB"/>
    <property type="match status" value="1"/>
</dbReference>
<dbReference type="Gene3D" id="3.40.250.10">
    <property type="entry name" value="Rhodanese-like domain"/>
    <property type="match status" value="1"/>
</dbReference>
<dbReference type="HAMAP" id="MF_01622">
    <property type="entry name" value="tRNA_sel_U_synth"/>
    <property type="match status" value="1"/>
</dbReference>
<dbReference type="InterPro" id="IPR001763">
    <property type="entry name" value="Rhodanese-like_dom"/>
</dbReference>
<dbReference type="InterPro" id="IPR036873">
    <property type="entry name" value="Rhodanese-like_dom_sf"/>
</dbReference>
<dbReference type="InterPro" id="IPR017582">
    <property type="entry name" value="SelU"/>
</dbReference>
<dbReference type="NCBIfam" id="NF008750">
    <property type="entry name" value="PRK11784.1-2"/>
    <property type="match status" value="1"/>
</dbReference>
<dbReference type="NCBIfam" id="NF008751">
    <property type="entry name" value="PRK11784.1-3"/>
    <property type="match status" value="1"/>
</dbReference>
<dbReference type="NCBIfam" id="TIGR03167">
    <property type="entry name" value="tRNA_sel_U_synt"/>
    <property type="match status" value="1"/>
</dbReference>
<dbReference type="PANTHER" id="PTHR30401">
    <property type="entry name" value="TRNA 2-SELENOURIDINE SYNTHASE"/>
    <property type="match status" value="1"/>
</dbReference>
<dbReference type="PANTHER" id="PTHR30401:SF0">
    <property type="entry name" value="TRNA 2-SELENOURIDINE SYNTHASE"/>
    <property type="match status" value="1"/>
</dbReference>
<dbReference type="Pfam" id="PF00581">
    <property type="entry name" value="Rhodanese"/>
    <property type="match status" value="1"/>
</dbReference>
<dbReference type="SMART" id="SM00450">
    <property type="entry name" value="RHOD"/>
    <property type="match status" value="1"/>
</dbReference>
<dbReference type="SUPFAM" id="SSF52821">
    <property type="entry name" value="Rhodanese/Cell cycle control phosphatase"/>
    <property type="match status" value="1"/>
</dbReference>
<dbReference type="PROSITE" id="PS50206">
    <property type="entry name" value="RHODANESE_3"/>
    <property type="match status" value="1"/>
</dbReference>
<reference key="1">
    <citation type="submission" date="2007-02" db="EMBL/GenBank/DDBJ databases">
        <title>Complete sequence of chromosome of Shewanella baltica OS155.</title>
        <authorList>
            <consortium name="US DOE Joint Genome Institute"/>
            <person name="Copeland A."/>
            <person name="Lucas S."/>
            <person name="Lapidus A."/>
            <person name="Barry K."/>
            <person name="Detter J.C."/>
            <person name="Glavina del Rio T."/>
            <person name="Hammon N."/>
            <person name="Israni S."/>
            <person name="Dalin E."/>
            <person name="Tice H."/>
            <person name="Pitluck S."/>
            <person name="Sims D.R."/>
            <person name="Brettin T."/>
            <person name="Bruce D."/>
            <person name="Han C."/>
            <person name="Tapia R."/>
            <person name="Brainard J."/>
            <person name="Schmutz J."/>
            <person name="Larimer F."/>
            <person name="Land M."/>
            <person name="Hauser L."/>
            <person name="Kyrpides N."/>
            <person name="Mikhailova N."/>
            <person name="Brettar I."/>
            <person name="Klappenbach J."/>
            <person name="Konstantinidis K."/>
            <person name="Rodrigues J."/>
            <person name="Tiedje J."/>
            <person name="Richardson P."/>
        </authorList>
    </citation>
    <scope>NUCLEOTIDE SEQUENCE [LARGE SCALE GENOMIC DNA]</scope>
    <source>
        <strain>OS155 / ATCC BAA-1091</strain>
    </source>
</reference>